<comment type="function">
    <text evidence="1">Binds the poly(A) tail of mRNA. Appears to be an important mediator of the multiple roles of the poly(A) tail in mRNA biogenesis, stability and translation. In the nucleus, involved in both mRNA cleavage and polyadenylation. Is also required for efficient mRNA export to the cytoplasm. Acts in concert with a poly(A)-specific nuclease (PAN) to affect poly(A) tail shortening, which may occur concomitantly with either nucleocytoplasmic mRNA transport or translational initiation. In the cytoplasm, stimulates translation initiation and regulates mRNA decay through translation termination-coupled poly(A) shortening, probably mediated by PAN (By similarity).</text>
</comment>
<comment type="subcellular location">
    <subcellularLocation>
        <location evidence="1">Cytoplasm</location>
    </subcellularLocation>
    <subcellularLocation>
        <location evidence="1">Nucleus</location>
    </subcellularLocation>
</comment>
<comment type="similarity">
    <text evidence="5">Belongs to the polyadenylate-binding protein type-1 family.</text>
</comment>
<organism>
    <name type="scientific">Neurospora crassa (strain ATCC 24698 / 74-OR23-1A / CBS 708.71 / DSM 1257 / FGSC 987)</name>
    <dbReference type="NCBI Taxonomy" id="367110"/>
    <lineage>
        <taxon>Eukaryota</taxon>
        <taxon>Fungi</taxon>
        <taxon>Dikarya</taxon>
        <taxon>Ascomycota</taxon>
        <taxon>Pezizomycotina</taxon>
        <taxon>Sordariomycetes</taxon>
        <taxon>Sordariomycetidae</taxon>
        <taxon>Sordariales</taxon>
        <taxon>Sordariaceae</taxon>
        <taxon>Neurospora</taxon>
    </lineage>
</organism>
<proteinExistence type="inferred from homology"/>
<accession>Q7S6N6</accession>
<sequence length="764" mass="82317">MAATSTAAVDQLAADLGNTSLDNKAAAPAPIDTSAVPEAQAEGAEAAPTPTAAPHPQASASLYVGELDPSVTEAMLFELFSQIGSVASIRVCRDAVTRRSLGYAYVNYNTTADGEKALEELNYTLIKGRPCRIMWSQRDPALRKTGAGNIFIKNLDAAIDNKALHDTFAAFGNILSCKVAQDEHGNSKGYGFVHYETDEAASQAIKHVNGMLLNEKKVYVGHHIPKKDRQSKFEEMKANFTNVYVKNINNEVTDEEFRELFAKFGEVTSSSLARDQEGKSRGFGFVNFTTHEAAAQAVDELNGKDFRGQDLYVGRAQKKHEREEELRKSYEAARLEKANKYQGVNLYIKNLGDDVDDDKLRAMFSEYGPITSAKVMRDSLIEGSEEKDEKDKENKKEGETKEEEQNEGSEKKTEKKGDRKLGKSKGFGFVCFSNPDDATKAVTEMNQRMVDGKPLYVALAQRKDVRKSQLEASIQARNQLRMQQAAAQAGMPQQYMQAPVYYAGQQPGFMPAPGGRGVPFPQGGIVPGVQGGRPGQYPYQQGGRGGVPPQQMPPMGYPINQFGPGAFPPNTPQYMAAMGQVGALGGGRGGPAGRGPQGIPAGIPQGLQGGPAVPGYPPAGRPQNGGGRGTPRGNANFMAAGRGASPIPGAPADLSAGSFLQAQLATTQDPQAQKQIIGENLFPKIQAIQPALAGKITGMLLEMDNAELINLFEDDNALNVKVQEALAVYDEYLKTQGQQPTQQPAEANGEQPKAEEQKPEEQKA</sequence>
<gene>
    <name type="primary">pabp-1</name>
    <name type="synonym">pab1</name>
    <name type="ORF">NCU04799</name>
</gene>
<protein>
    <recommendedName>
        <fullName>Polyadenylate-binding protein, cytoplasmic and nuclear</fullName>
        <shortName>PABP</shortName>
        <shortName>Poly(A)-binding protein</shortName>
    </recommendedName>
    <alternativeName>
        <fullName>Polyadenylate tail-binding protein</fullName>
    </alternativeName>
</protein>
<keyword id="KW-0963">Cytoplasm</keyword>
<keyword id="KW-0507">mRNA processing</keyword>
<keyword id="KW-0509">mRNA transport</keyword>
<keyword id="KW-0539">Nucleus</keyword>
<keyword id="KW-1185">Reference proteome</keyword>
<keyword id="KW-0677">Repeat</keyword>
<keyword id="KW-0694">RNA-binding</keyword>
<keyword id="KW-0810">Translation regulation</keyword>
<keyword id="KW-0813">Transport</keyword>
<reference key="1">
    <citation type="journal article" date="2003" name="Nature">
        <title>The genome sequence of the filamentous fungus Neurospora crassa.</title>
        <authorList>
            <person name="Galagan J.E."/>
            <person name="Calvo S.E."/>
            <person name="Borkovich K.A."/>
            <person name="Selker E.U."/>
            <person name="Read N.D."/>
            <person name="Jaffe D.B."/>
            <person name="FitzHugh W."/>
            <person name="Ma L.-J."/>
            <person name="Smirnov S."/>
            <person name="Purcell S."/>
            <person name="Rehman B."/>
            <person name="Elkins T."/>
            <person name="Engels R."/>
            <person name="Wang S."/>
            <person name="Nielsen C.B."/>
            <person name="Butler J."/>
            <person name="Endrizzi M."/>
            <person name="Qui D."/>
            <person name="Ianakiev P."/>
            <person name="Bell-Pedersen D."/>
            <person name="Nelson M.A."/>
            <person name="Werner-Washburne M."/>
            <person name="Selitrennikoff C.P."/>
            <person name="Kinsey J.A."/>
            <person name="Braun E.L."/>
            <person name="Zelter A."/>
            <person name="Schulte U."/>
            <person name="Kothe G.O."/>
            <person name="Jedd G."/>
            <person name="Mewes H.-W."/>
            <person name="Staben C."/>
            <person name="Marcotte E."/>
            <person name="Greenberg D."/>
            <person name="Roy A."/>
            <person name="Foley K."/>
            <person name="Naylor J."/>
            <person name="Stange-Thomann N."/>
            <person name="Barrett R."/>
            <person name="Gnerre S."/>
            <person name="Kamal M."/>
            <person name="Kamvysselis M."/>
            <person name="Mauceli E.W."/>
            <person name="Bielke C."/>
            <person name="Rudd S."/>
            <person name="Frishman D."/>
            <person name="Krystofova S."/>
            <person name="Rasmussen C."/>
            <person name="Metzenberg R.L."/>
            <person name="Perkins D.D."/>
            <person name="Kroken S."/>
            <person name="Cogoni C."/>
            <person name="Macino G."/>
            <person name="Catcheside D.E.A."/>
            <person name="Li W."/>
            <person name="Pratt R.J."/>
            <person name="Osmani S.A."/>
            <person name="DeSouza C.P.C."/>
            <person name="Glass N.L."/>
            <person name="Orbach M.J."/>
            <person name="Berglund J.A."/>
            <person name="Voelker R."/>
            <person name="Yarden O."/>
            <person name="Plamann M."/>
            <person name="Seiler S."/>
            <person name="Dunlap J.C."/>
            <person name="Radford A."/>
            <person name="Aramayo R."/>
            <person name="Natvig D.O."/>
            <person name="Alex L.A."/>
            <person name="Mannhaupt G."/>
            <person name="Ebbole D.J."/>
            <person name="Freitag M."/>
            <person name="Paulsen I."/>
            <person name="Sachs M.S."/>
            <person name="Lander E.S."/>
            <person name="Nusbaum C."/>
            <person name="Birren B.W."/>
        </authorList>
    </citation>
    <scope>NUCLEOTIDE SEQUENCE [LARGE SCALE GENOMIC DNA]</scope>
    <source>
        <strain>ATCC 24698 / 74-OR23-1A / CBS 708.71 / DSM 1257 / FGSC 987</strain>
    </source>
</reference>
<feature type="chain" id="PRO_0000295396" description="Polyadenylate-binding protein, cytoplasmic and nuclear">
    <location>
        <begin position="1"/>
        <end position="764"/>
    </location>
</feature>
<feature type="domain" description="RRM 1" evidence="2">
    <location>
        <begin position="60"/>
        <end position="138"/>
    </location>
</feature>
<feature type="domain" description="RRM 2" evidence="2">
    <location>
        <begin position="148"/>
        <end position="225"/>
    </location>
</feature>
<feature type="domain" description="RRM 3" evidence="2">
    <location>
        <begin position="241"/>
        <end position="318"/>
    </location>
</feature>
<feature type="domain" description="RRM 4" evidence="2">
    <location>
        <begin position="344"/>
        <end position="462"/>
    </location>
</feature>
<feature type="domain" description="PABC" evidence="3">
    <location>
        <begin position="657"/>
        <end position="734"/>
    </location>
</feature>
<feature type="region of interest" description="Disordered" evidence="4">
    <location>
        <begin position="36"/>
        <end position="56"/>
    </location>
</feature>
<feature type="region of interest" description="Disordered" evidence="4">
    <location>
        <begin position="375"/>
        <end position="420"/>
    </location>
</feature>
<feature type="region of interest" description="Disordered" evidence="4">
    <location>
        <begin position="587"/>
        <end position="634"/>
    </location>
</feature>
<feature type="region of interest" description="Disordered" evidence="4">
    <location>
        <begin position="735"/>
        <end position="764"/>
    </location>
</feature>
<feature type="compositionally biased region" description="Basic and acidic residues" evidence="4">
    <location>
        <begin position="387"/>
        <end position="399"/>
    </location>
</feature>
<feature type="compositionally biased region" description="Basic and acidic residues" evidence="4">
    <location>
        <begin position="408"/>
        <end position="420"/>
    </location>
</feature>
<feature type="compositionally biased region" description="Gly residues" evidence="4">
    <location>
        <begin position="587"/>
        <end position="596"/>
    </location>
</feature>
<feature type="compositionally biased region" description="Low complexity" evidence="4">
    <location>
        <begin position="597"/>
        <end position="613"/>
    </location>
</feature>
<feature type="compositionally biased region" description="Polar residues" evidence="4">
    <location>
        <begin position="735"/>
        <end position="745"/>
    </location>
</feature>
<feature type="compositionally biased region" description="Basic and acidic residues" evidence="4">
    <location>
        <begin position="752"/>
        <end position="764"/>
    </location>
</feature>
<evidence type="ECO:0000250" key="1"/>
<evidence type="ECO:0000255" key="2">
    <source>
        <dbReference type="PROSITE-ProRule" id="PRU00176"/>
    </source>
</evidence>
<evidence type="ECO:0000255" key="3">
    <source>
        <dbReference type="PROSITE-ProRule" id="PRU00641"/>
    </source>
</evidence>
<evidence type="ECO:0000256" key="4">
    <source>
        <dbReference type="SAM" id="MobiDB-lite"/>
    </source>
</evidence>
<evidence type="ECO:0000305" key="5"/>
<name>PABP_NEUCR</name>
<dbReference type="EMBL" id="CM002241">
    <property type="protein sequence ID" value="EAA31189.1"/>
    <property type="molecule type" value="Genomic_DNA"/>
</dbReference>
<dbReference type="RefSeq" id="XP_960425.1">
    <property type="nucleotide sequence ID" value="XM_955332.3"/>
</dbReference>
<dbReference type="SMR" id="Q7S6N6"/>
<dbReference type="FunCoup" id="Q7S6N6">
    <property type="interactions" value="1238"/>
</dbReference>
<dbReference type="STRING" id="367110.Q7S6N6"/>
<dbReference type="PaxDb" id="5141-EFNCRP00000004477"/>
<dbReference type="EnsemblFungi" id="EAA31189">
    <property type="protein sequence ID" value="EAA31189"/>
    <property type="gene ID" value="NCU04799"/>
</dbReference>
<dbReference type="GeneID" id="3876563"/>
<dbReference type="KEGG" id="ncr:NCU04799"/>
<dbReference type="VEuPathDB" id="FungiDB:NCU04799"/>
<dbReference type="HOGENOM" id="CLU_012062_22_4_1"/>
<dbReference type="InParanoid" id="Q7S6N6"/>
<dbReference type="OMA" id="QQPGFMP"/>
<dbReference type="OrthoDB" id="19742at2759"/>
<dbReference type="Proteomes" id="UP000001805">
    <property type="component" value="Chromosome 5, Linkage Group VI"/>
</dbReference>
<dbReference type="GO" id="GO:0010494">
    <property type="term" value="C:cytoplasmic stress granule"/>
    <property type="evidence" value="ECO:0000318"/>
    <property type="project" value="GO_Central"/>
</dbReference>
<dbReference type="GO" id="GO:0005829">
    <property type="term" value="C:cytosol"/>
    <property type="evidence" value="ECO:0000318"/>
    <property type="project" value="GO_Central"/>
</dbReference>
<dbReference type="GO" id="GO:0005634">
    <property type="term" value="C:nucleus"/>
    <property type="evidence" value="ECO:0000318"/>
    <property type="project" value="GO_Central"/>
</dbReference>
<dbReference type="GO" id="GO:1990904">
    <property type="term" value="C:ribonucleoprotein complex"/>
    <property type="evidence" value="ECO:0000318"/>
    <property type="project" value="GO_Central"/>
</dbReference>
<dbReference type="GO" id="GO:0003730">
    <property type="term" value="F:mRNA 3'-UTR binding"/>
    <property type="evidence" value="ECO:0000318"/>
    <property type="project" value="GO_Central"/>
</dbReference>
<dbReference type="GO" id="GO:0008143">
    <property type="term" value="F:poly(A) binding"/>
    <property type="evidence" value="ECO:0000318"/>
    <property type="project" value="GO_Central"/>
</dbReference>
<dbReference type="GO" id="GO:0008266">
    <property type="term" value="F:poly(U) RNA binding"/>
    <property type="evidence" value="ECO:0000318"/>
    <property type="project" value="GO_Central"/>
</dbReference>
<dbReference type="GO" id="GO:0006397">
    <property type="term" value="P:mRNA processing"/>
    <property type="evidence" value="ECO:0007669"/>
    <property type="project" value="UniProtKB-KW"/>
</dbReference>
<dbReference type="GO" id="GO:0051028">
    <property type="term" value="P:mRNA transport"/>
    <property type="evidence" value="ECO:0007669"/>
    <property type="project" value="UniProtKB-KW"/>
</dbReference>
<dbReference type="GO" id="GO:0006417">
    <property type="term" value="P:regulation of translation"/>
    <property type="evidence" value="ECO:0007669"/>
    <property type="project" value="UniProtKB-KW"/>
</dbReference>
<dbReference type="CDD" id="cd12378">
    <property type="entry name" value="RRM1_I_PABPs"/>
    <property type="match status" value="1"/>
</dbReference>
<dbReference type="CDD" id="cd12379">
    <property type="entry name" value="RRM2_I_PABPs"/>
    <property type="match status" value="1"/>
</dbReference>
<dbReference type="CDD" id="cd12380">
    <property type="entry name" value="RRM3_I_PABPs"/>
    <property type="match status" value="1"/>
</dbReference>
<dbReference type="CDD" id="cd12381">
    <property type="entry name" value="RRM4_I_PABPs"/>
    <property type="match status" value="1"/>
</dbReference>
<dbReference type="FunFam" id="1.10.1900.10:FF:000004">
    <property type="entry name" value="Polyadenylate-binding protein"/>
    <property type="match status" value="1"/>
</dbReference>
<dbReference type="FunFam" id="3.30.70.330:FF:000003">
    <property type="entry name" value="Polyadenylate-binding protein"/>
    <property type="match status" value="1"/>
</dbReference>
<dbReference type="FunFam" id="3.30.70.330:FF:000355">
    <property type="entry name" value="Polyadenylate-binding protein"/>
    <property type="match status" value="1"/>
</dbReference>
<dbReference type="FunFam" id="3.30.70.330:FF:000384">
    <property type="entry name" value="Polyadenylate-binding protein"/>
    <property type="match status" value="1"/>
</dbReference>
<dbReference type="Gene3D" id="3.30.70.330">
    <property type="match status" value="4"/>
</dbReference>
<dbReference type="Gene3D" id="1.10.1900.10">
    <property type="entry name" value="c-terminal domain of poly(a) binding protein"/>
    <property type="match status" value="1"/>
</dbReference>
<dbReference type="InterPro" id="IPR012677">
    <property type="entry name" value="Nucleotide-bd_a/b_plait_sf"/>
</dbReference>
<dbReference type="InterPro" id="IPR036053">
    <property type="entry name" value="PABP-dom"/>
</dbReference>
<dbReference type="InterPro" id="IPR006515">
    <property type="entry name" value="PABP_1234"/>
</dbReference>
<dbReference type="InterPro" id="IPR002004">
    <property type="entry name" value="PABP_HYD_C"/>
</dbReference>
<dbReference type="InterPro" id="IPR034364">
    <property type="entry name" value="PABP_RRM1"/>
</dbReference>
<dbReference type="InterPro" id="IPR035979">
    <property type="entry name" value="RBD_domain_sf"/>
</dbReference>
<dbReference type="InterPro" id="IPR045305">
    <property type="entry name" value="RRM2_I_PABPs"/>
</dbReference>
<dbReference type="InterPro" id="IPR000504">
    <property type="entry name" value="RRM_dom"/>
</dbReference>
<dbReference type="InterPro" id="IPR003954">
    <property type="entry name" value="RRM_dom_euk"/>
</dbReference>
<dbReference type="NCBIfam" id="TIGR01628">
    <property type="entry name" value="PABP-1234"/>
    <property type="match status" value="1"/>
</dbReference>
<dbReference type="PANTHER" id="PTHR24012">
    <property type="entry name" value="RNA BINDING PROTEIN"/>
    <property type="match status" value="1"/>
</dbReference>
<dbReference type="Pfam" id="PF00658">
    <property type="entry name" value="MLLE"/>
    <property type="match status" value="1"/>
</dbReference>
<dbReference type="Pfam" id="PF00076">
    <property type="entry name" value="RRM_1"/>
    <property type="match status" value="5"/>
</dbReference>
<dbReference type="SMART" id="SM00517">
    <property type="entry name" value="PolyA"/>
    <property type="match status" value="1"/>
</dbReference>
<dbReference type="SMART" id="SM00360">
    <property type="entry name" value="RRM"/>
    <property type="match status" value="4"/>
</dbReference>
<dbReference type="SMART" id="SM00361">
    <property type="entry name" value="RRM_1"/>
    <property type="match status" value="3"/>
</dbReference>
<dbReference type="SUPFAM" id="SSF63570">
    <property type="entry name" value="PABC (PABP) domain"/>
    <property type="match status" value="1"/>
</dbReference>
<dbReference type="SUPFAM" id="SSF54928">
    <property type="entry name" value="RNA-binding domain, RBD"/>
    <property type="match status" value="3"/>
</dbReference>
<dbReference type="PROSITE" id="PS51309">
    <property type="entry name" value="PABC"/>
    <property type="match status" value="1"/>
</dbReference>
<dbReference type="PROSITE" id="PS50102">
    <property type="entry name" value="RRM"/>
    <property type="match status" value="4"/>
</dbReference>